<reference key="1">
    <citation type="journal article" date="2009" name="PLoS Genet.">
        <title>Organised genome dynamics in the Escherichia coli species results in highly diverse adaptive paths.</title>
        <authorList>
            <person name="Touchon M."/>
            <person name="Hoede C."/>
            <person name="Tenaillon O."/>
            <person name="Barbe V."/>
            <person name="Baeriswyl S."/>
            <person name="Bidet P."/>
            <person name="Bingen E."/>
            <person name="Bonacorsi S."/>
            <person name="Bouchier C."/>
            <person name="Bouvet O."/>
            <person name="Calteau A."/>
            <person name="Chiapello H."/>
            <person name="Clermont O."/>
            <person name="Cruveiller S."/>
            <person name="Danchin A."/>
            <person name="Diard M."/>
            <person name="Dossat C."/>
            <person name="Karoui M.E."/>
            <person name="Frapy E."/>
            <person name="Garry L."/>
            <person name="Ghigo J.M."/>
            <person name="Gilles A.M."/>
            <person name="Johnson J."/>
            <person name="Le Bouguenec C."/>
            <person name="Lescat M."/>
            <person name="Mangenot S."/>
            <person name="Martinez-Jehanne V."/>
            <person name="Matic I."/>
            <person name="Nassif X."/>
            <person name="Oztas S."/>
            <person name="Petit M.A."/>
            <person name="Pichon C."/>
            <person name="Rouy Z."/>
            <person name="Ruf C.S."/>
            <person name="Schneider D."/>
            <person name="Tourret J."/>
            <person name="Vacherie B."/>
            <person name="Vallenet D."/>
            <person name="Medigue C."/>
            <person name="Rocha E.P.C."/>
            <person name="Denamur E."/>
        </authorList>
    </citation>
    <scope>NUCLEOTIDE SEQUENCE [LARGE SCALE GENOMIC DNA]</scope>
    <source>
        <strain>S88 / ExPEC</strain>
    </source>
</reference>
<evidence type="ECO:0000255" key="1">
    <source>
        <dbReference type="HAMAP-Rule" id="MF_01432"/>
    </source>
</evidence>
<keyword id="KW-0326">Glycosidase</keyword>
<keyword id="KW-0378">Hydrolase</keyword>
<keyword id="KW-1185">Reference proteome</keyword>
<gene>
    <name evidence="1" type="primary">rihC</name>
    <name type="ordered locus">ECS88_0029</name>
</gene>
<name>RIHC_ECO45</name>
<organism>
    <name type="scientific">Escherichia coli O45:K1 (strain S88 / ExPEC)</name>
    <dbReference type="NCBI Taxonomy" id="585035"/>
    <lineage>
        <taxon>Bacteria</taxon>
        <taxon>Pseudomonadati</taxon>
        <taxon>Pseudomonadota</taxon>
        <taxon>Gammaproteobacteria</taxon>
        <taxon>Enterobacterales</taxon>
        <taxon>Enterobacteriaceae</taxon>
        <taxon>Escherichia</taxon>
    </lineage>
</organism>
<protein>
    <recommendedName>
        <fullName evidence="1">Non-specific ribonucleoside hydrolase RihC</fullName>
        <ecNumber evidence="1">3.2.-.-</ecNumber>
    </recommendedName>
    <alternativeName>
        <fullName evidence="1">Purine/pyrimidine ribonucleoside hydrolase</fullName>
    </alternativeName>
</protein>
<feature type="chain" id="PRO_1000145808" description="Non-specific ribonucleoside hydrolase RihC">
    <location>
        <begin position="1"/>
        <end position="304"/>
    </location>
</feature>
<feature type="active site" evidence="1">
    <location>
        <position position="233"/>
    </location>
</feature>
<accession>B7MAF0</accession>
<proteinExistence type="inferred from homology"/>
<comment type="function">
    <text evidence="1">Hydrolyzes both purine and pyrimidine ribonucleosides with a broad-substrate specificity.</text>
</comment>
<comment type="similarity">
    <text evidence="1">Belongs to the IUNH family. RihC subfamily.</text>
</comment>
<dbReference type="EC" id="3.2.-.-" evidence="1"/>
<dbReference type="EMBL" id="CU928161">
    <property type="protein sequence ID" value="CAR01396.1"/>
    <property type="molecule type" value="Genomic_DNA"/>
</dbReference>
<dbReference type="RefSeq" id="WP_001239167.1">
    <property type="nucleotide sequence ID" value="NC_011742.1"/>
</dbReference>
<dbReference type="SMR" id="B7MAF0"/>
<dbReference type="KEGG" id="ecz:ECS88_0029"/>
<dbReference type="HOGENOM" id="CLU_036838_2_2_6"/>
<dbReference type="Proteomes" id="UP000000747">
    <property type="component" value="Chromosome"/>
</dbReference>
<dbReference type="GO" id="GO:0005829">
    <property type="term" value="C:cytosol"/>
    <property type="evidence" value="ECO:0007669"/>
    <property type="project" value="TreeGrafter"/>
</dbReference>
<dbReference type="GO" id="GO:0008477">
    <property type="term" value="F:purine nucleosidase activity"/>
    <property type="evidence" value="ECO:0007669"/>
    <property type="project" value="TreeGrafter"/>
</dbReference>
<dbReference type="GO" id="GO:0045437">
    <property type="term" value="F:uridine nucleosidase activity"/>
    <property type="evidence" value="ECO:0007669"/>
    <property type="project" value="UniProtKB-ARBA"/>
</dbReference>
<dbReference type="GO" id="GO:0006144">
    <property type="term" value="P:purine nucleobase metabolic process"/>
    <property type="evidence" value="ECO:0007669"/>
    <property type="project" value="UniProtKB-UniRule"/>
</dbReference>
<dbReference type="GO" id="GO:0006152">
    <property type="term" value="P:purine nucleoside catabolic process"/>
    <property type="evidence" value="ECO:0007669"/>
    <property type="project" value="TreeGrafter"/>
</dbReference>
<dbReference type="GO" id="GO:0006206">
    <property type="term" value="P:pyrimidine nucleobase metabolic process"/>
    <property type="evidence" value="ECO:0007669"/>
    <property type="project" value="UniProtKB-UniRule"/>
</dbReference>
<dbReference type="CDD" id="cd02651">
    <property type="entry name" value="nuc_hydro_IU_UC_XIUA"/>
    <property type="match status" value="1"/>
</dbReference>
<dbReference type="FunFam" id="3.90.245.10:FF:000002">
    <property type="entry name" value="Non-specific ribonucleoside hydrolase RihC"/>
    <property type="match status" value="1"/>
</dbReference>
<dbReference type="Gene3D" id="3.90.245.10">
    <property type="entry name" value="Ribonucleoside hydrolase-like"/>
    <property type="match status" value="1"/>
</dbReference>
<dbReference type="HAMAP" id="MF_01432">
    <property type="entry name" value="Nucleosid_hydro_RihC"/>
    <property type="match status" value="1"/>
</dbReference>
<dbReference type="InterPro" id="IPR015910">
    <property type="entry name" value="I/U_nuclsd_hydro_CS"/>
</dbReference>
<dbReference type="InterPro" id="IPR001910">
    <property type="entry name" value="Inosine/uridine_hydrolase_dom"/>
</dbReference>
<dbReference type="InterPro" id="IPR023186">
    <property type="entry name" value="IUNH"/>
</dbReference>
<dbReference type="InterPro" id="IPR022976">
    <property type="entry name" value="Nucleosid_hydro_RihC_nonspecif"/>
</dbReference>
<dbReference type="InterPro" id="IPR036452">
    <property type="entry name" value="Ribo_hydro-like"/>
</dbReference>
<dbReference type="NCBIfam" id="NF008036">
    <property type="entry name" value="PRK10768.1"/>
    <property type="match status" value="1"/>
</dbReference>
<dbReference type="PANTHER" id="PTHR12304">
    <property type="entry name" value="INOSINE-URIDINE PREFERRING NUCLEOSIDE HYDROLASE"/>
    <property type="match status" value="1"/>
</dbReference>
<dbReference type="PANTHER" id="PTHR12304:SF15">
    <property type="entry name" value="NON-SPECIFIC RIBONUCLEOSIDE HYDROLASE RIHC"/>
    <property type="match status" value="1"/>
</dbReference>
<dbReference type="Pfam" id="PF01156">
    <property type="entry name" value="IU_nuc_hydro"/>
    <property type="match status" value="1"/>
</dbReference>
<dbReference type="SUPFAM" id="SSF53590">
    <property type="entry name" value="Nucleoside hydrolase"/>
    <property type="match status" value="1"/>
</dbReference>
<dbReference type="PROSITE" id="PS01247">
    <property type="entry name" value="IUNH"/>
    <property type="match status" value="1"/>
</dbReference>
<sequence>MRLPIFLDTDPGIDDAVAIAAAIFAPELDLQLMTTVAGNVSVEKTTRNALQLLHFWNVDIPLAQGAAVPLVRAPRDAASVHGESGMAGYDFVEHNRQPLGIPAFLAIRDALMRAPEPVTLVAIGPLTNIALLLSQCPECKPYIRRLVIMGGSAGRGNCTPNAEFNIAADPEAAACVFRSGIEIVMCGLDVTNQAILTPDYLATLPELNRTGKMLHALFSHYRSGSMQSGLRMHDLCAIAWLVRPELFTLKPCFVAVETQGEFTSGTTVVDIDGCLGKPANVQVALDLDVKGFQQWVAEVLALAL</sequence>